<gene>
    <name type="primary">MEMO1</name>
    <name type="synonym">C2orf4</name>
    <name type="synonym">MEMO</name>
    <name type="synonym">NS5ATP7</name>
    <name type="ORF">CGI-27</name>
</gene>
<dbReference type="EMBL" id="AF363446">
    <property type="protein sequence ID" value="AAL34462.1"/>
    <property type="molecule type" value="mRNA"/>
</dbReference>
<dbReference type="EMBL" id="AB041018">
    <property type="protein sequence ID" value="BAD74066.1"/>
    <property type="molecule type" value="mRNA"/>
</dbReference>
<dbReference type="EMBL" id="AB041019">
    <property type="protein sequence ID" value="BAD74067.1"/>
    <property type="molecule type" value="mRNA"/>
</dbReference>
<dbReference type="EMBL" id="AF529368">
    <property type="protein sequence ID" value="AAQ09602.1"/>
    <property type="molecule type" value="mRNA"/>
</dbReference>
<dbReference type="EMBL" id="AF132961">
    <property type="protein sequence ID" value="AAD27736.1"/>
    <property type="molecule type" value="mRNA"/>
</dbReference>
<dbReference type="EMBL" id="AK297128">
    <property type="protein sequence ID" value="BAG59632.1"/>
    <property type="molecule type" value="mRNA"/>
</dbReference>
<dbReference type="EMBL" id="AL121652">
    <property type="status" value="NOT_ANNOTATED_CDS"/>
    <property type="molecule type" value="Genomic_DNA"/>
</dbReference>
<dbReference type="EMBL" id="AL121655">
    <property type="status" value="NOT_ANNOTATED_CDS"/>
    <property type="molecule type" value="Genomic_DNA"/>
</dbReference>
<dbReference type="EMBL" id="CH471053">
    <property type="protein sequence ID" value="EAX00467.1"/>
    <property type="molecule type" value="Genomic_DNA"/>
</dbReference>
<dbReference type="EMBL" id="CH471053">
    <property type="protein sequence ID" value="EAX00469.1"/>
    <property type="molecule type" value="Genomic_DNA"/>
</dbReference>
<dbReference type="EMBL" id="CH471053">
    <property type="protein sequence ID" value="EAX00470.1"/>
    <property type="molecule type" value="Genomic_DNA"/>
</dbReference>
<dbReference type="EMBL" id="CH471053">
    <property type="protein sequence ID" value="EAX00472.1"/>
    <property type="molecule type" value="Genomic_DNA"/>
</dbReference>
<dbReference type="EMBL" id="BC018733">
    <property type="protein sequence ID" value="AAH18733.1"/>
    <property type="molecule type" value="mRNA"/>
</dbReference>
<dbReference type="EMBL" id="BC070046">
    <property type="protein sequence ID" value="AAH70046.1"/>
    <property type="molecule type" value="mRNA"/>
</dbReference>
<dbReference type="EMBL" id="BC094681">
    <property type="protein sequence ID" value="AAH94681.1"/>
    <property type="molecule type" value="mRNA"/>
</dbReference>
<dbReference type="CCDS" id="CCDS1776.1">
    <molecule id="Q9Y316-1"/>
</dbReference>
<dbReference type="CCDS" id="CCDS46255.1">
    <molecule id="Q9Y316-2"/>
</dbReference>
<dbReference type="RefSeq" id="NP_001131074.1">
    <molecule id="Q9Y316-2"/>
    <property type="nucleotide sequence ID" value="NM_001137602.4"/>
</dbReference>
<dbReference type="RefSeq" id="NP_001288762.1">
    <molecule id="Q9Y316-1"/>
    <property type="nucleotide sequence ID" value="NM_001301833.4"/>
</dbReference>
<dbReference type="RefSeq" id="NP_001288781.1">
    <property type="nucleotide sequence ID" value="NM_001301852.1"/>
</dbReference>
<dbReference type="RefSeq" id="NP_001358843.1">
    <molecule id="Q9Y316-1"/>
    <property type="nucleotide sequence ID" value="NM_001371914.2"/>
</dbReference>
<dbReference type="RefSeq" id="NP_001358845.1">
    <molecule id="Q9Y316-2"/>
    <property type="nucleotide sequence ID" value="NM_001371916.2"/>
</dbReference>
<dbReference type="RefSeq" id="NP_057039.1">
    <molecule id="Q9Y316-1"/>
    <property type="nucleotide sequence ID" value="NM_015955.5"/>
</dbReference>
<dbReference type="RefSeq" id="XP_011531194.1">
    <property type="nucleotide sequence ID" value="XM_011532892.2"/>
</dbReference>
<dbReference type="RefSeq" id="XP_016859744.1">
    <property type="nucleotide sequence ID" value="XM_017004255.1"/>
</dbReference>
<dbReference type="RefSeq" id="XP_047300591.1">
    <molecule id="Q9Y316-2"/>
    <property type="nucleotide sequence ID" value="XM_047444635.1"/>
</dbReference>
<dbReference type="RefSeq" id="XP_054198364.1">
    <molecule id="Q9Y316-2"/>
    <property type="nucleotide sequence ID" value="XM_054342389.1"/>
</dbReference>
<dbReference type="PDB" id="3BCZ">
    <property type="method" value="X-ray"/>
    <property type="resolution" value="2.10 A"/>
    <property type="chains" value="A/B/C/D=5-297"/>
</dbReference>
<dbReference type="PDB" id="3BD0">
    <property type="method" value="X-ray"/>
    <property type="resolution" value="3.01 A"/>
    <property type="chains" value="A/B/C/D=5-297"/>
</dbReference>
<dbReference type="PDB" id="7KQ8">
    <property type="method" value="X-ray"/>
    <property type="resolution" value="2.15 A"/>
    <property type="chains" value="A/B/C/D=4-297"/>
</dbReference>
<dbReference type="PDB" id="7L5C">
    <property type="method" value="X-ray"/>
    <property type="resolution" value="2.55 A"/>
    <property type="chains" value="A/B/C/D=4-297"/>
</dbReference>
<dbReference type="PDB" id="7M8H">
    <property type="method" value="X-ray"/>
    <property type="resolution" value="1.75 A"/>
    <property type="chains" value="A/B/C/D=4-297"/>
</dbReference>
<dbReference type="PDBsum" id="3BCZ"/>
<dbReference type="PDBsum" id="3BD0"/>
<dbReference type="PDBsum" id="7KQ8"/>
<dbReference type="PDBsum" id="7L5C"/>
<dbReference type="PDBsum" id="7M8H"/>
<dbReference type="SMR" id="Q9Y316"/>
<dbReference type="BioGRID" id="119263">
    <property type="interactions" value="65"/>
</dbReference>
<dbReference type="CORUM" id="Q9Y316"/>
<dbReference type="FunCoup" id="Q9Y316">
    <property type="interactions" value="2896"/>
</dbReference>
<dbReference type="IntAct" id="Q9Y316">
    <property type="interactions" value="35"/>
</dbReference>
<dbReference type="MINT" id="Q9Y316"/>
<dbReference type="STRING" id="9606.ENSP00000295065"/>
<dbReference type="GlyGen" id="Q9Y316">
    <property type="glycosylation" value="1 site, 1 O-linked glycan (1 site)"/>
</dbReference>
<dbReference type="iPTMnet" id="Q9Y316"/>
<dbReference type="PhosphoSitePlus" id="Q9Y316"/>
<dbReference type="BioMuta" id="MEMO1"/>
<dbReference type="DMDM" id="7388490"/>
<dbReference type="jPOST" id="Q9Y316"/>
<dbReference type="MassIVE" id="Q9Y316"/>
<dbReference type="PaxDb" id="9606-ENSP00000295065"/>
<dbReference type="PeptideAtlas" id="Q9Y316"/>
<dbReference type="ProteomicsDB" id="63699"/>
<dbReference type="ProteomicsDB" id="85960">
    <molecule id="Q9Y316-1"/>
</dbReference>
<dbReference type="ProteomicsDB" id="85961">
    <molecule id="Q9Y316-2"/>
</dbReference>
<dbReference type="Pumba" id="Q9Y316"/>
<dbReference type="Antibodypedia" id="47374">
    <property type="antibodies" value="161 antibodies from 26 providers"/>
</dbReference>
<dbReference type="DNASU" id="51072"/>
<dbReference type="Ensembl" id="ENST00000295065.9">
    <molecule id="Q9Y316-1"/>
    <property type="protein sequence ID" value="ENSP00000295065.4"/>
    <property type="gene ID" value="ENSG00000162959.14"/>
</dbReference>
<dbReference type="Ensembl" id="ENST00000379383.7">
    <molecule id="Q9Y316-3"/>
    <property type="protein sequence ID" value="ENSP00000368691.3"/>
    <property type="gene ID" value="ENSG00000162959.14"/>
</dbReference>
<dbReference type="Ensembl" id="ENST00000404530.6">
    <molecule id="Q9Y316-1"/>
    <property type="protein sequence ID" value="ENSP00000385557.1"/>
    <property type="gene ID" value="ENSG00000162959.14"/>
</dbReference>
<dbReference type="Ensembl" id="ENST00000426310.6">
    <molecule id="Q9Y316-2"/>
    <property type="protein sequence ID" value="ENSP00000400795.2"/>
    <property type="gene ID" value="ENSG00000162959.14"/>
</dbReference>
<dbReference type="GeneID" id="51072"/>
<dbReference type="KEGG" id="hsa:51072"/>
<dbReference type="MANE-Select" id="ENST00000404530.6">
    <property type="protein sequence ID" value="ENSP00000385557.1"/>
    <property type="RefSeq nucleotide sequence ID" value="NM_001301833.4"/>
    <property type="RefSeq protein sequence ID" value="NP_001288762.1"/>
</dbReference>
<dbReference type="UCSC" id="uc002rnx.4">
    <molecule id="Q9Y316-1"/>
    <property type="organism name" value="human"/>
</dbReference>
<dbReference type="AGR" id="HGNC:14014"/>
<dbReference type="CTD" id="51072"/>
<dbReference type="DisGeNET" id="51072"/>
<dbReference type="GeneCards" id="MEMO1"/>
<dbReference type="HGNC" id="HGNC:14014">
    <property type="gene designation" value="MEMO1"/>
</dbReference>
<dbReference type="HPA" id="ENSG00000162959">
    <property type="expression patterns" value="Low tissue specificity"/>
</dbReference>
<dbReference type="MIM" id="611786">
    <property type="type" value="gene"/>
</dbReference>
<dbReference type="neXtProt" id="NX_Q9Y316"/>
<dbReference type="OpenTargets" id="ENSG00000162959"/>
<dbReference type="PharmGKB" id="PA162395745"/>
<dbReference type="VEuPathDB" id="HostDB:ENSG00000162959"/>
<dbReference type="eggNOG" id="KOG3086">
    <property type="taxonomic scope" value="Eukaryota"/>
</dbReference>
<dbReference type="GeneTree" id="ENSGT00390000006408"/>
<dbReference type="HOGENOM" id="CLU_038085_0_1_1"/>
<dbReference type="InParanoid" id="Q9Y316"/>
<dbReference type="OMA" id="EQEAQYG"/>
<dbReference type="OrthoDB" id="417112at2759"/>
<dbReference type="PAN-GO" id="Q9Y316">
    <property type="GO annotations" value="0 GO annotations based on evolutionary models"/>
</dbReference>
<dbReference type="PhylomeDB" id="Q9Y316"/>
<dbReference type="TreeFam" id="TF300014"/>
<dbReference type="PathwayCommons" id="Q9Y316"/>
<dbReference type="Reactome" id="R-HSA-6785631">
    <property type="pathway name" value="ERBB2 Regulates Cell Motility"/>
</dbReference>
<dbReference type="SignaLink" id="Q9Y316"/>
<dbReference type="BioGRID-ORCS" id="51072">
    <property type="hits" value="42 hits in 675 CRISPR screens"/>
</dbReference>
<dbReference type="ChiTaRS" id="MEMO1">
    <property type="organism name" value="human"/>
</dbReference>
<dbReference type="EvolutionaryTrace" id="Q9Y316"/>
<dbReference type="GenomeRNAi" id="51072"/>
<dbReference type="Pharos" id="Q9Y316">
    <property type="development level" value="Tbio"/>
</dbReference>
<dbReference type="PRO" id="PR:Q9Y316"/>
<dbReference type="Proteomes" id="UP000005640">
    <property type="component" value="Chromosome 2"/>
</dbReference>
<dbReference type="RNAct" id="Q9Y316">
    <property type="molecule type" value="protein"/>
</dbReference>
<dbReference type="Bgee" id="ENSG00000162959">
    <property type="expression patterns" value="Expressed in left testis and 98 other cell types or tissues"/>
</dbReference>
<dbReference type="ExpressionAtlas" id="Q9Y316">
    <property type="expression patterns" value="baseline and differential"/>
</dbReference>
<dbReference type="GO" id="GO:0005829">
    <property type="term" value="C:cytosol"/>
    <property type="evidence" value="ECO:0007005"/>
    <property type="project" value="UniProtKB"/>
</dbReference>
<dbReference type="GO" id="GO:0005634">
    <property type="term" value="C:nucleus"/>
    <property type="evidence" value="ECO:0007005"/>
    <property type="project" value="UniProtKB"/>
</dbReference>
<dbReference type="GO" id="GO:0032886">
    <property type="term" value="P:regulation of microtubule-based process"/>
    <property type="evidence" value="ECO:0000315"/>
    <property type="project" value="UniProtKB"/>
</dbReference>
<dbReference type="CDD" id="cd07361">
    <property type="entry name" value="MEMO_like"/>
    <property type="match status" value="1"/>
</dbReference>
<dbReference type="FunFam" id="3.40.830.10:FF:000002">
    <property type="entry name" value="MEMO1 isoform 1"/>
    <property type="match status" value="1"/>
</dbReference>
<dbReference type="Gene3D" id="3.40.830.10">
    <property type="entry name" value="LigB-like"/>
    <property type="match status" value="1"/>
</dbReference>
<dbReference type="HAMAP" id="MF_00055">
    <property type="entry name" value="MEMO1"/>
    <property type="match status" value="1"/>
</dbReference>
<dbReference type="InterPro" id="IPR002737">
    <property type="entry name" value="MEMO1_fam"/>
</dbReference>
<dbReference type="NCBIfam" id="TIGR04336">
    <property type="entry name" value="AmmeMemoSam_B"/>
    <property type="match status" value="1"/>
</dbReference>
<dbReference type="PANTHER" id="PTHR11060">
    <property type="entry name" value="PROTEIN MEMO1"/>
    <property type="match status" value="1"/>
</dbReference>
<dbReference type="PANTHER" id="PTHR11060:SF0">
    <property type="entry name" value="PROTEIN MEMO1"/>
    <property type="match status" value="1"/>
</dbReference>
<dbReference type="Pfam" id="PF01875">
    <property type="entry name" value="Memo"/>
    <property type="match status" value="1"/>
</dbReference>
<evidence type="ECO:0000250" key="1">
    <source>
        <dbReference type="UniProtKB" id="Q91VH6"/>
    </source>
</evidence>
<evidence type="ECO:0000269" key="2">
    <source>
    </source>
</evidence>
<evidence type="ECO:0000269" key="3">
    <source>
    </source>
</evidence>
<evidence type="ECO:0000269" key="4">
    <source>
    </source>
</evidence>
<evidence type="ECO:0000303" key="5">
    <source>
    </source>
</evidence>
<evidence type="ECO:0000303" key="6">
    <source ref="2"/>
</evidence>
<evidence type="ECO:0000305" key="7"/>
<evidence type="ECO:0007829" key="8">
    <source>
        <dbReference type="PDB" id="7M8H"/>
    </source>
</evidence>
<organism>
    <name type="scientific">Homo sapiens</name>
    <name type="common">Human</name>
    <dbReference type="NCBI Taxonomy" id="9606"/>
    <lineage>
        <taxon>Eukaryota</taxon>
        <taxon>Metazoa</taxon>
        <taxon>Chordata</taxon>
        <taxon>Craniata</taxon>
        <taxon>Vertebrata</taxon>
        <taxon>Euteleostomi</taxon>
        <taxon>Mammalia</taxon>
        <taxon>Eutheria</taxon>
        <taxon>Euarchontoglires</taxon>
        <taxon>Primates</taxon>
        <taxon>Haplorrhini</taxon>
        <taxon>Catarrhini</taxon>
        <taxon>Hominidae</taxon>
        <taxon>Homo</taxon>
    </lineage>
</organism>
<feature type="chain" id="PRO_0000134394" description="Protein MEMO1">
    <location>
        <begin position="1"/>
        <end position="297"/>
    </location>
</feature>
<feature type="modified residue" description="Phosphotyrosine" evidence="1">
    <location>
        <position position="210"/>
    </location>
</feature>
<feature type="splice variant" id="VSP_047693" description="In isoform 3." evidence="6">
    <original>MSNRVVCREASHAGSWYTAS</original>
    <variation>MPLWRADKCQDVQSASWRPRRAD</variation>
    <location>
        <begin position="1"/>
        <end position="20"/>
    </location>
</feature>
<feature type="splice variant" id="VSP_041092" description="In isoform 2." evidence="5">
    <location>
        <begin position="49"/>
        <end position="71"/>
    </location>
</feature>
<feature type="mutagenesis site" description="Abolishes interaction with ERBB2." evidence="3">
    <original>W</original>
    <variation>A</variation>
    <location>
        <position position="16"/>
    </location>
</feature>
<feature type="mutagenesis site" description="Abolishes interaction with ERBB2." evidence="3">
    <original>H</original>
    <variation>A</variation>
    <location>
        <position position="49"/>
    </location>
</feature>
<feature type="mutagenesis site" description="Diminishes interaction with ERBB2." evidence="3">
    <original>Y</original>
    <variation>A</variation>
    <location>
        <position position="54"/>
    </location>
</feature>
<feature type="mutagenesis site" description="Abolishes interaction with ERBB2." evidence="3">
    <original>H</original>
    <variation>A</variation>
    <location>
        <position position="81"/>
    </location>
</feature>
<feature type="mutagenesis site" description="Abolishes interaction with ERBB2." evidence="3">
    <original>H</original>
    <variation>A</variation>
    <location>
        <position position="192"/>
    </location>
</feature>
<feature type="mutagenesis site" description="Abolishes interaction with ERBB2." evidence="3">
    <original>C</original>
    <variation>A</variation>
    <location>
        <position position="244"/>
    </location>
</feature>
<feature type="sequence conflict" description="In Ref. 8; AAH70046." evidence="7" ref="8">
    <original>Q</original>
    <variation>H</variation>
    <location>
        <position position="23"/>
    </location>
</feature>
<feature type="sequence conflict" description="In Ref. 5; BAG59632." evidence="7" ref="5">
    <original>L</original>
    <variation>P</variation>
    <location>
        <position position="172"/>
    </location>
</feature>
<feature type="turn" evidence="8">
    <location>
        <begin position="11"/>
        <end position="15"/>
    </location>
</feature>
<feature type="helix" evidence="8">
    <location>
        <begin position="21"/>
        <end position="33"/>
    </location>
</feature>
<feature type="strand" evidence="8">
    <location>
        <begin position="43"/>
        <end position="47"/>
    </location>
</feature>
<feature type="helix" evidence="8">
    <location>
        <begin position="52"/>
        <end position="63"/>
    </location>
</feature>
<feature type="turn" evidence="8">
    <location>
        <begin position="68"/>
        <end position="70"/>
    </location>
</feature>
<feature type="strand" evidence="8">
    <location>
        <begin position="73"/>
        <end position="79"/>
    </location>
</feature>
<feature type="strand" evidence="8">
    <location>
        <begin position="81"/>
        <end position="83"/>
    </location>
</feature>
<feature type="strand" evidence="8">
    <location>
        <begin position="86"/>
        <end position="90"/>
    </location>
</feature>
<feature type="strand" evidence="8">
    <location>
        <begin position="94"/>
        <end position="96"/>
    </location>
</feature>
<feature type="strand" evidence="8">
    <location>
        <begin position="103"/>
        <end position="105"/>
    </location>
</feature>
<feature type="helix" evidence="8">
    <location>
        <begin position="107"/>
        <end position="115"/>
    </location>
</feature>
<feature type="strand" evidence="8">
    <location>
        <begin position="119"/>
        <end position="121"/>
    </location>
</feature>
<feature type="helix" evidence="8">
    <location>
        <begin position="124"/>
        <end position="129"/>
    </location>
</feature>
<feature type="helix" evidence="8">
    <location>
        <begin position="134"/>
        <end position="136"/>
    </location>
</feature>
<feature type="helix" evidence="8">
    <location>
        <begin position="137"/>
        <end position="143"/>
    </location>
</feature>
<feature type="helix" evidence="8">
    <location>
        <begin position="145"/>
        <end position="147"/>
    </location>
</feature>
<feature type="strand" evidence="8">
    <location>
        <begin position="152"/>
        <end position="158"/>
    </location>
</feature>
<feature type="helix" evidence="8">
    <location>
        <begin position="163"/>
        <end position="177"/>
    </location>
</feature>
<feature type="strand" evidence="8">
    <location>
        <begin position="182"/>
        <end position="187"/>
    </location>
</feature>
<feature type="strand" evidence="8">
    <location>
        <begin position="192"/>
        <end position="194"/>
    </location>
</feature>
<feature type="helix" evidence="8">
    <location>
        <begin position="195"/>
        <end position="197"/>
    </location>
</feature>
<feature type="helix" evidence="8">
    <location>
        <begin position="204"/>
        <end position="206"/>
    </location>
</feature>
<feature type="helix" evidence="8">
    <location>
        <begin position="209"/>
        <end position="225"/>
    </location>
</feature>
<feature type="helix" evidence="8">
    <location>
        <begin position="229"/>
        <end position="239"/>
    </location>
</feature>
<feature type="helix" evidence="8">
    <location>
        <begin position="246"/>
        <end position="261"/>
    </location>
</feature>
<feature type="strand" evidence="8">
    <location>
        <begin position="266"/>
        <end position="277"/>
    </location>
</feature>
<feature type="strand" evidence="8">
    <location>
        <begin position="286"/>
        <end position="296"/>
    </location>
</feature>
<name>MEMO1_HUMAN</name>
<protein>
    <recommendedName>
        <fullName>Protein MEMO1</fullName>
    </recommendedName>
    <alternativeName>
        <fullName>C21orf19-like protein</fullName>
    </alternativeName>
    <alternativeName>
        <fullName>Hepatitis C virus NS5A-transactivated protein 7</fullName>
        <shortName>HCV NS5A-transactivated protein 7</shortName>
    </alternativeName>
    <alternativeName>
        <fullName>Mediator of ErbB2-driven cell motility 1</fullName>
        <shortName>Mediator of cell motility 1</shortName>
        <shortName>Memo-1</shortName>
    </alternativeName>
</protein>
<sequence length="297" mass="33733">MSNRVVCREASHAGSWYTASGPQLNAQLEGWLSQVQSTKRPARAIIAPHAGYTYCGSCAAHAYKQVDPSITRRIFILGPSHHVPLSRCALSSVDIYRTPLYDLRIDQKIYGELWKTGMFERMSLQTDEDEHSIEMHLPYTAKAMESHKDEFTIIPVLVGALSESKEQEFGKLFSKYLADPSNLFVVSSDFCHWGQRFRYSYYDESQGEIYRSIEHLDKMGMSIIEQLDPVSFSNYLKKYHNTICGRHPIGVLLNAITELQKNGMNMSFSFLNYAQSSQCRNWQDSSVSYAAGALTVH</sequence>
<accession>Q9Y316</accession>
<accession>B4DLS0</accession>
<accession>D6W575</accession>
<accession>Q5R2V8</accession>
<accession>Q5R2V9</accession>
<accession>Q6NSL5</accession>
<keyword id="KW-0002">3D-structure</keyword>
<keyword id="KW-0025">Alternative splicing</keyword>
<keyword id="KW-0597">Phosphoprotein</keyword>
<keyword id="KW-1267">Proteomics identification</keyword>
<keyword id="KW-1185">Reference proteome</keyword>
<proteinExistence type="evidence at protein level"/>
<comment type="function">
    <text evidence="2 4">May control cell migration by relaying extracellular chemotactic signals to the microtubule cytoskeleton. Mediator of ERBB2 signaling. The MEMO1-RHOA-DIAPH1 signaling pathway plays an important role in ERBB2-dependent stabilization of microtubules at the cell cortex. It controls the localization of APC and CLASP2 to the cell membrane, via the regulation of GSK3B activity. In turn, membrane-bound APC allows the localization of the MACF1 to the cell membrane, which is required for microtubule capture and stabilization. Is required for breast carcinoma cell migration.</text>
</comment>
<comment type="subunit">
    <text evidence="2 3">Interacts with ERBB2 phosphorylated on 'Tyr-1248'.</text>
</comment>
<comment type="interaction">
    <interactant intactId="EBI-1104564">
        <id>Q9Y316</id>
    </interactant>
    <interactant intactId="EBI-10176008">
        <id>O94983-5</id>
        <label>CAMTA2</label>
    </interactant>
    <organismsDiffer>false</organismsDiffer>
    <experiments>3</experiments>
</comment>
<comment type="interaction">
    <interactant intactId="EBI-1104564">
        <id>Q9Y316</id>
    </interactant>
    <interactant intactId="EBI-6873363">
        <id>Q8WUE5</id>
        <label>CT55</label>
    </interactant>
    <organismsDiffer>false</organismsDiffer>
    <experiments>3</experiments>
</comment>
<comment type="interaction">
    <interactant intactId="EBI-1104564">
        <id>Q9Y316</id>
    </interactant>
    <interactant intactId="EBI-742054">
        <id>Q96D03</id>
        <label>DDIT4L</label>
    </interactant>
    <organismsDiffer>false</organismsDiffer>
    <experiments>3</experiments>
</comment>
<comment type="interaction">
    <interactant intactId="EBI-1104564">
        <id>Q9Y316</id>
    </interactant>
    <interactant intactId="EBI-3197883">
        <id>Q9NT22</id>
        <label>EMILIN3</label>
    </interactant>
    <organismsDiffer>false</organismsDiffer>
    <experiments>3</experiments>
</comment>
<comment type="interaction">
    <interactant intactId="EBI-1104564">
        <id>Q9Y316</id>
    </interactant>
    <interactant intactId="EBI-641062">
        <id>P04626</id>
        <label>ERBB2</label>
    </interactant>
    <organismsDiffer>false</organismsDiffer>
    <experiments>6</experiments>
</comment>
<comment type="interaction">
    <interactant intactId="EBI-1104564">
        <id>Q9Y316</id>
    </interactant>
    <interactant intactId="EBI-447646">
        <id>Q9UJY4</id>
        <label>GGA2</label>
    </interactant>
    <organismsDiffer>false</organismsDiffer>
    <experiments>3</experiments>
</comment>
<comment type="interaction">
    <interactant intactId="EBI-1104564">
        <id>Q9Y316</id>
    </interactant>
    <interactant intactId="EBI-739832">
        <id>Q8TBB1</id>
        <label>LNX1</label>
    </interactant>
    <organismsDiffer>false</organismsDiffer>
    <experiments>6</experiments>
</comment>
<comment type="interaction">
    <interactant intactId="EBI-1104564">
        <id>Q9Y316</id>
    </interactant>
    <interactant intactId="EBI-741037">
        <id>Q9BRK4</id>
        <label>LZTS2</label>
    </interactant>
    <organismsDiffer>false</organismsDiffer>
    <experiments>3</experiments>
</comment>
<comment type="interaction">
    <interactant intactId="EBI-1104564">
        <id>Q9Y316</id>
    </interactant>
    <interactant intactId="EBI-2880603">
        <id>Q86WR7</id>
        <label>PROSER2</label>
    </interactant>
    <organismsDiffer>false</organismsDiffer>
    <experiments>2</experiments>
</comment>
<comment type="interaction">
    <interactant intactId="EBI-1104564">
        <id>Q9Y316</id>
    </interactant>
    <interactant intactId="EBI-2512147">
        <id>Q8IUH3</id>
        <label>RBM45</label>
    </interactant>
    <organismsDiffer>false</organismsDiffer>
    <experiments>3</experiments>
</comment>
<comment type="interaction">
    <interactant intactId="EBI-1104564">
        <id>Q9Y316</id>
    </interactant>
    <interactant intactId="EBI-307352">
        <id>Q04864</id>
        <label>REL</label>
    </interactant>
    <organismsDiffer>false</organismsDiffer>
    <experiments>3</experiments>
</comment>
<comment type="interaction">
    <interactant intactId="EBI-1104564">
        <id>Q9Y316</id>
    </interactant>
    <interactant intactId="EBI-746118">
        <id>Q8HWS3</id>
        <label>RFX6</label>
    </interactant>
    <organismsDiffer>false</organismsDiffer>
    <experiments>3</experiments>
</comment>
<comment type="interaction">
    <interactant intactId="EBI-1104564">
        <id>Q9Y316</id>
    </interactant>
    <interactant intactId="EBI-624237">
        <id>O75410</id>
        <label>TACC1</label>
    </interactant>
    <organismsDiffer>false</organismsDiffer>
    <experiments>4</experiments>
</comment>
<comment type="interaction">
    <interactant intactId="EBI-1104564">
        <id>Q9Y316</id>
    </interactant>
    <interactant intactId="EBI-12007872">
        <id>O75410-7</id>
        <label>TACC1</label>
    </interactant>
    <organismsDiffer>false</organismsDiffer>
    <experiments>3</experiments>
</comment>
<comment type="interaction">
    <interactant intactId="EBI-1104564">
        <id>Q9Y316</id>
    </interactant>
    <interactant intactId="EBI-533224">
        <id>P15884</id>
        <label>TCF4</label>
    </interactant>
    <organismsDiffer>false</organismsDiffer>
    <experiments>3</experiments>
</comment>
<comment type="interaction">
    <interactant intactId="EBI-1104564">
        <id>Q9Y316</id>
    </interactant>
    <interactant intactId="EBI-13636688">
        <id>P15884-3</id>
        <label>TCF4</label>
    </interactant>
    <organismsDiffer>false</organismsDiffer>
    <experiments>3</experiments>
</comment>
<comment type="interaction">
    <interactant intactId="EBI-1104564">
        <id>Q9Y316</id>
    </interactant>
    <interactant intactId="EBI-719493">
        <id>P14373</id>
        <label>TRIM27</label>
    </interactant>
    <organismsDiffer>false</organismsDiffer>
    <experiments>3</experiments>
</comment>
<comment type="interaction">
    <interactant intactId="EBI-1104564">
        <id>Q9Y316</id>
    </interactant>
    <interactant intactId="EBI-742327">
        <id>Q15654</id>
        <label>TRIP6</label>
    </interactant>
    <organismsDiffer>false</organismsDiffer>
    <experiments>3</experiments>
</comment>
<comment type="interaction">
    <interactant intactId="EBI-1104564">
        <id>Q9Y316</id>
    </interactant>
    <interactant intactId="EBI-723574">
        <id>O15209</id>
        <label>ZBTB22</label>
    </interactant>
    <organismsDiffer>false</organismsDiffer>
    <experiments>3</experiments>
</comment>
<comment type="interaction">
    <interactant intactId="EBI-1104564">
        <id>Q9Y316</id>
    </interactant>
    <interactant intactId="EBI-625509">
        <id>Q8N720</id>
        <label>ZNF655</label>
    </interactant>
    <organismsDiffer>false</organismsDiffer>
    <experiments>3</experiments>
</comment>
<comment type="alternative products">
    <event type="alternative splicing"/>
    <isoform>
        <id>Q9Y316-1</id>
        <name>1</name>
        <sequence type="displayed"/>
    </isoform>
    <isoform>
        <id>Q9Y316-2</id>
        <name>2</name>
        <sequence type="described" ref="VSP_041092"/>
    </isoform>
    <isoform>
        <id>Q9Y316-3</id>
        <name>3</name>
        <sequence type="described" ref="VSP_047693"/>
    </isoform>
</comment>
<comment type="similarity">
    <text evidence="7">Belongs to the MEMO1 family.</text>
</comment>
<reference key="1">
    <citation type="journal article" date="2001" name="Genomics">
        <title>From PREDs and open reading frames to cDNA isolation: revisiting the human chromosome 21 transcription map.</title>
        <authorList>
            <person name="Reymond A."/>
            <person name="Friedli M."/>
            <person name="Neergaard Henrichsen C."/>
            <person name="Chapot F."/>
            <person name="Deutsch S."/>
            <person name="Ucla C."/>
            <person name="Rossier C."/>
            <person name="Lyle R."/>
            <person name="Guipponi M."/>
            <person name="Antonarakis S.E."/>
        </authorList>
    </citation>
    <scope>NUCLEOTIDE SEQUENCE [MRNA] (ISOFORM 1)</scope>
</reference>
<reference key="2">
    <citation type="submission" date="2000-04" db="EMBL/GenBank/DDBJ databases">
        <title>Cloning of two isoforms of C2orf4 gene.</title>
        <authorList>
            <person name="Shibuya K."/>
            <person name="Kudoh J."/>
            <person name="Shimizu N."/>
        </authorList>
    </citation>
    <scope>NUCLEOTIDE SEQUENCE [MRNA] (ISOFORMS 1 AND 3)</scope>
    <source>
        <tissue>Heart</tissue>
        <tissue>Skeletal muscle</tissue>
    </source>
</reference>
<reference key="3">
    <citation type="submission" date="2002-07" db="EMBL/GenBank/DDBJ databases">
        <title>Cloning and identification of human gene 7 transactivated by hepatitis C virus NS5A protein.</title>
        <authorList>
            <person name="Liu Y."/>
            <person name="Cheng J."/>
            <person name="Wang G."/>
            <person name="Wang J."/>
            <person name="Zhang L."/>
            <person name="Chen J."/>
            <person name="Li L."/>
        </authorList>
    </citation>
    <scope>NUCLEOTIDE SEQUENCE [MRNA] (ISOFORM 1)</scope>
</reference>
<reference key="4">
    <citation type="journal article" date="2000" name="Genome Res.">
        <title>Identification of novel human genes evolutionarily conserved in Caenorhabditis elegans by comparative proteomics.</title>
        <authorList>
            <person name="Lai C.-H."/>
            <person name="Chou C.-Y."/>
            <person name="Ch'ang L.-Y."/>
            <person name="Liu C.-S."/>
            <person name="Lin W.-C."/>
        </authorList>
    </citation>
    <scope>NUCLEOTIDE SEQUENCE [LARGE SCALE MRNA] (ISOFORM 1)</scope>
</reference>
<reference key="5">
    <citation type="journal article" date="2004" name="Nat. Genet.">
        <title>Complete sequencing and characterization of 21,243 full-length human cDNAs.</title>
        <authorList>
            <person name="Ota T."/>
            <person name="Suzuki Y."/>
            <person name="Nishikawa T."/>
            <person name="Otsuki T."/>
            <person name="Sugiyama T."/>
            <person name="Irie R."/>
            <person name="Wakamatsu A."/>
            <person name="Hayashi K."/>
            <person name="Sato H."/>
            <person name="Nagai K."/>
            <person name="Kimura K."/>
            <person name="Makita H."/>
            <person name="Sekine M."/>
            <person name="Obayashi M."/>
            <person name="Nishi T."/>
            <person name="Shibahara T."/>
            <person name="Tanaka T."/>
            <person name="Ishii S."/>
            <person name="Yamamoto J."/>
            <person name="Saito K."/>
            <person name="Kawai Y."/>
            <person name="Isono Y."/>
            <person name="Nakamura Y."/>
            <person name="Nagahari K."/>
            <person name="Murakami K."/>
            <person name="Yasuda T."/>
            <person name="Iwayanagi T."/>
            <person name="Wagatsuma M."/>
            <person name="Shiratori A."/>
            <person name="Sudo H."/>
            <person name="Hosoiri T."/>
            <person name="Kaku Y."/>
            <person name="Kodaira H."/>
            <person name="Kondo H."/>
            <person name="Sugawara M."/>
            <person name="Takahashi M."/>
            <person name="Kanda K."/>
            <person name="Yokoi T."/>
            <person name="Furuya T."/>
            <person name="Kikkawa E."/>
            <person name="Omura Y."/>
            <person name="Abe K."/>
            <person name="Kamihara K."/>
            <person name="Katsuta N."/>
            <person name="Sato K."/>
            <person name="Tanikawa M."/>
            <person name="Yamazaki M."/>
            <person name="Ninomiya K."/>
            <person name="Ishibashi T."/>
            <person name="Yamashita H."/>
            <person name="Murakawa K."/>
            <person name="Fujimori K."/>
            <person name="Tanai H."/>
            <person name="Kimata M."/>
            <person name="Watanabe M."/>
            <person name="Hiraoka S."/>
            <person name="Chiba Y."/>
            <person name="Ishida S."/>
            <person name="Ono Y."/>
            <person name="Takiguchi S."/>
            <person name="Watanabe S."/>
            <person name="Yosida M."/>
            <person name="Hotuta T."/>
            <person name="Kusano J."/>
            <person name="Kanehori K."/>
            <person name="Takahashi-Fujii A."/>
            <person name="Hara H."/>
            <person name="Tanase T.-O."/>
            <person name="Nomura Y."/>
            <person name="Togiya S."/>
            <person name="Komai F."/>
            <person name="Hara R."/>
            <person name="Takeuchi K."/>
            <person name="Arita M."/>
            <person name="Imose N."/>
            <person name="Musashino K."/>
            <person name="Yuuki H."/>
            <person name="Oshima A."/>
            <person name="Sasaki N."/>
            <person name="Aotsuka S."/>
            <person name="Yoshikawa Y."/>
            <person name="Matsunawa H."/>
            <person name="Ichihara T."/>
            <person name="Shiohata N."/>
            <person name="Sano S."/>
            <person name="Moriya S."/>
            <person name="Momiyama H."/>
            <person name="Satoh N."/>
            <person name="Takami S."/>
            <person name="Terashima Y."/>
            <person name="Suzuki O."/>
            <person name="Nakagawa S."/>
            <person name="Senoh A."/>
            <person name="Mizoguchi H."/>
            <person name="Goto Y."/>
            <person name="Shimizu F."/>
            <person name="Wakebe H."/>
            <person name="Hishigaki H."/>
            <person name="Watanabe T."/>
            <person name="Sugiyama A."/>
            <person name="Takemoto M."/>
            <person name="Kawakami B."/>
            <person name="Yamazaki M."/>
            <person name="Watanabe K."/>
            <person name="Kumagai A."/>
            <person name="Itakura S."/>
            <person name="Fukuzumi Y."/>
            <person name="Fujimori Y."/>
            <person name="Komiyama M."/>
            <person name="Tashiro H."/>
            <person name="Tanigami A."/>
            <person name="Fujiwara T."/>
            <person name="Ono T."/>
            <person name="Yamada K."/>
            <person name="Fujii Y."/>
            <person name="Ozaki K."/>
            <person name="Hirao M."/>
            <person name="Ohmori Y."/>
            <person name="Kawabata A."/>
            <person name="Hikiji T."/>
            <person name="Kobatake N."/>
            <person name="Inagaki H."/>
            <person name="Ikema Y."/>
            <person name="Okamoto S."/>
            <person name="Okitani R."/>
            <person name="Kawakami T."/>
            <person name="Noguchi S."/>
            <person name="Itoh T."/>
            <person name="Shigeta K."/>
            <person name="Senba T."/>
            <person name="Matsumura K."/>
            <person name="Nakajima Y."/>
            <person name="Mizuno T."/>
            <person name="Morinaga M."/>
            <person name="Sasaki M."/>
            <person name="Togashi T."/>
            <person name="Oyama M."/>
            <person name="Hata H."/>
            <person name="Watanabe M."/>
            <person name="Komatsu T."/>
            <person name="Mizushima-Sugano J."/>
            <person name="Satoh T."/>
            <person name="Shirai Y."/>
            <person name="Takahashi Y."/>
            <person name="Nakagawa K."/>
            <person name="Okumura K."/>
            <person name="Nagase T."/>
            <person name="Nomura N."/>
            <person name="Kikuchi H."/>
            <person name="Masuho Y."/>
            <person name="Yamashita R."/>
            <person name="Nakai K."/>
            <person name="Yada T."/>
            <person name="Nakamura Y."/>
            <person name="Ohara O."/>
            <person name="Isogai T."/>
            <person name="Sugano S."/>
        </authorList>
    </citation>
    <scope>NUCLEOTIDE SEQUENCE [LARGE SCALE MRNA] (ISOFORM 2)</scope>
</reference>
<reference key="6">
    <citation type="journal article" date="2005" name="Nature">
        <title>Generation and annotation of the DNA sequences of human chromosomes 2 and 4.</title>
        <authorList>
            <person name="Hillier L.W."/>
            <person name="Graves T.A."/>
            <person name="Fulton R.S."/>
            <person name="Fulton L.A."/>
            <person name="Pepin K.H."/>
            <person name="Minx P."/>
            <person name="Wagner-McPherson C."/>
            <person name="Layman D."/>
            <person name="Wylie K."/>
            <person name="Sekhon M."/>
            <person name="Becker M.C."/>
            <person name="Fewell G.A."/>
            <person name="Delehaunty K.D."/>
            <person name="Miner T.L."/>
            <person name="Nash W.E."/>
            <person name="Kremitzki C."/>
            <person name="Oddy L."/>
            <person name="Du H."/>
            <person name="Sun H."/>
            <person name="Bradshaw-Cordum H."/>
            <person name="Ali J."/>
            <person name="Carter J."/>
            <person name="Cordes M."/>
            <person name="Harris A."/>
            <person name="Isak A."/>
            <person name="van Brunt A."/>
            <person name="Nguyen C."/>
            <person name="Du F."/>
            <person name="Courtney L."/>
            <person name="Kalicki J."/>
            <person name="Ozersky P."/>
            <person name="Abbott S."/>
            <person name="Armstrong J."/>
            <person name="Belter E.A."/>
            <person name="Caruso L."/>
            <person name="Cedroni M."/>
            <person name="Cotton M."/>
            <person name="Davidson T."/>
            <person name="Desai A."/>
            <person name="Elliott G."/>
            <person name="Erb T."/>
            <person name="Fronick C."/>
            <person name="Gaige T."/>
            <person name="Haakenson W."/>
            <person name="Haglund K."/>
            <person name="Holmes A."/>
            <person name="Harkins R."/>
            <person name="Kim K."/>
            <person name="Kruchowski S.S."/>
            <person name="Strong C.M."/>
            <person name="Grewal N."/>
            <person name="Goyea E."/>
            <person name="Hou S."/>
            <person name="Levy A."/>
            <person name="Martinka S."/>
            <person name="Mead K."/>
            <person name="McLellan M.D."/>
            <person name="Meyer R."/>
            <person name="Randall-Maher J."/>
            <person name="Tomlinson C."/>
            <person name="Dauphin-Kohlberg S."/>
            <person name="Kozlowicz-Reilly A."/>
            <person name="Shah N."/>
            <person name="Swearengen-Shahid S."/>
            <person name="Snider J."/>
            <person name="Strong J.T."/>
            <person name="Thompson J."/>
            <person name="Yoakum M."/>
            <person name="Leonard S."/>
            <person name="Pearman C."/>
            <person name="Trani L."/>
            <person name="Radionenko M."/>
            <person name="Waligorski J.E."/>
            <person name="Wang C."/>
            <person name="Rock S.M."/>
            <person name="Tin-Wollam A.-M."/>
            <person name="Maupin R."/>
            <person name="Latreille P."/>
            <person name="Wendl M.C."/>
            <person name="Yang S.-P."/>
            <person name="Pohl C."/>
            <person name="Wallis J.W."/>
            <person name="Spieth J."/>
            <person name="Bieri T.A."/>
            <person name="Berkowicz N."/>
            <person name="Nelson J.O."/>
            <person name="Osborne J."/>
            <person name="Ding L."/>
            <person name="Meyer R."/>
            <person name="Sabo A."/>
            <person name="Shotland Y."/>
            <person name="Sinha P."/>
            <person name="Wohldmann P.E."/>
            <person name="Cook L.L."/>
            <person name="Hickenbotham M.T."/>
            <person name="Eldred J."/>
            <person name="Williams D."/>
            <person name="Jones T.A."/>
            <person name="She X."/>
            <person name="Ciccarelli F.D."/>
            <person name="Izaurralde E."/>
            <person name="Taylor J."/>
            <person name="Schmutz J."/>
            <person name="Myers R.M."/>
            <person name="Cox D.R."/>
            <person name="Huang X."/>
            <person name="McPherson J.D."/>
            <person name="Mardis E.R."/>
            <person name="Clifton S.W."/>
            <person name="Warren W.C."/>
            <person name="Chinwalla A.T."/>
            <person name="Eddy S.R."/>
            <person name="Marra M.A."/>
            <person name="Ovcharenko I."/>
            <person name="Furey T.S."/>
            <person name="Miller W."/>
            <person name="Eichler E.E."/>
            <person name="Bork P."/>
            <person name="Suyama M."/>
            <person name="Torrents D."/>
            <person name="Waterston R.H."/>
            <person name="Wilson R.K."/>
        </authorList>
    </citation>
    <scope>NUCLEOTIDE SEQUENCE [LARGE SCALE GENOMIC DNA]</scope>
</reference>
<reference key="7">
    <citation type="submission" date="2005-09" db="EMBL/GenBank/DDBJ databases">
        <authorList>
            <person name="Mural R.J."/>
            <person name="Istrail S."/>
            <person name="Sutton G.G."/>
            <person name="Florea L."/>
            <person name="Halpern A.L."/>
            <person name="Mobarry C.M."/>
            <person name="Lippert R."/>
            <person name="Walenz B."/>
            <person name="Shatkay H."/>
            <person name="Dew I."/>
            <person name="Miller J.R."/>
            <person name="Flanigan M.J."/>
            <person name="Edwards N.J."/>
            <person name="Bolanos R."/>
            <person name="Fasulo D."/>
            <person name="Halldorsson B.V."/>
            <person name="Hannenhalli S."/>
            <person name="Turner R."/>
            <person name="Yooseph S."/>
            <person name="Lu F."/>
            <person name="Nusskern D.R."/>
            <person name="Shue B.C."/>
            <person name="Zheng X.H."/>
            <person name="Zhong F."/>
            <person name="Delcher A.L."/>
            <person name="Huson D.H."/>
            <person name="Kravitz S.A."/>
            <person name="Mouchard L."/>
            <person name="Reinert K."/>
            <person name="Remington K.A."/>
            <person name="Clark A.G."/>
            <person name="Waterman M.S."/>
            <person name="Eichler E.E."/>
            <person name="Adams M.D."/>
            <person name="Hunkapiller M.W."/>
            <person name="Myers E.W."/>
            <person name="Venter J.C."/>
        </authorList>
    </citation>
    <scope>NUCLEOTIDE SEQUENCE [LARGE SCALE GENOMIC DNA]</scope>
</reference>
<reference key="8">
    <citation type="journal article" date="2004" name="Genome Res.">
        <title>The status, quality, and expansion of the NIH full-length cDNA project: the Mammalian Gene Collection (MGC).</title>
        <authorList>
            <consortium name="The MGC Project Team"/>
        </authorList>
    </citation>
    <scope>NUCLEOTIDE SEQUENCE [LARGE SCALE MRNA] (ISOFORM 1)</scope>
    <source>
        <tissue>B-cell</tissue>
        <tissue>PNS</tissue>
        <tissue>Testis</tissue>
    </source>
</reference>
<reference key="9">
    <citation type="journal article" date="2004" name="Nat. Cell Biol.">
        <title>Memo mediates ErbB2-driven cell motility.</title>
        <authorList>
            <person name="Marone R."/>
            <person name="Hess D."/>
            <person name="Dankort D."/>
            <person name="Muller W.J."/>
            <person name="Hynes N.E."/>
            <person name="Badache A."/>
        </authorList>
    </citation>
    <scope>FUNCTION</scope>
    <scope>INTERACTION WITH ERBB2</scope>
</reference>
<reference key="10">
    <citation type="journal article" date="2010" name="Proc. Natl. Acad. Sci. U.S.A.">
        <title>ErbB2 receptor controls microtubule capture by recruiting ACF7 to the plasma membrane of migrating cells.</title>
        <authorList>
            <person name="Zaoui K."/>
            <person name="Benseddik K."/>
            <person name="Daou P."/>
            <person name="Salaun D."/>
            <person name="Badache A."/>
        </authorList>
    </citation>
    <scope>FUNCTION</scope>
</reference>
<reference key="11">
    <citation type="journal article" date="2011" name="BMC Syst. Biol.">
        <title>Initial characterization of the human central proteome.</title>
        <authorList>
            <person name="Burkard T.R."/>
            <person name="Planyavsky M."/>
            <person name="Kaupe I."/>
            <person name="Breitwieser F.P."/>
            <person name="Buerckstuemmer T."/>
            <person name="Bennett K.L."/>
            <person name="Superti-Furga G."/>
            <person name="Colinge J."/>
        </authorList>
    </citation>
    <scope>IDENTIFICATION BY MASS SPECTROMETRY [LARGE SCALE ANALYSIS]</scope>
</reference>
<reference key="12">
    <citation type="journal article" date="2015" name="Proteomics">
        <title>N-terminome analysis of the human mitochondrial proteome.</title>
        <authorList>
            <person name="Vaca Jacome A.S."/>
            <person name="Rabilloud T."/>
            <person name="Schaeffer-Reiss C."/>
            <person name="Rompais M."/>
            <person name="Ayoub D."/>
            <person name="Lane L."/>
            <person name="Bairoch A."/>
            <person name="Van Dorsselaer A."/>
            <person name="Carapito C."/>
        </authorList>
    </citation>
    <scope>IDENTIFICATION BY MASS SPECTROMETRY [LARGE SCALE ANALYSIS]</scope>
</reference>
<reference key="13">
    <citation type="journal article" date="2008" name="J. Biol. Chem.">
        <title>Memo is homologous to nonheme iron dioxygenases and binds an ErbB2-derived phosphopeptide in its vestigial active site.</title>
        <authorList>
            <person name="Qiu C."/>
            <person name="Lienhard S."/>
            <person name="Hynes N.E."/>
            <person name="Badache A."/>
            <person name="Leahy D.J."/>
        </authorList>
    </citation>
    <scope>X-RAY CRYSTALLOGRAPHY (2.1 ANGSTROMS) OF 5-297</scope>
    <scope>INTERACTION WITH ERBB2</scope>
    <scope>MUTAGENESIS OF TRP-16; HIS-49; TYR-54; HIS-81; HIS-192 AND CYS-244</scope>
</reference>